<protein>
    <recommendedName>
        <fullName evidence="1">Bifunctional protein FolD</fullName>
    </recommendedName>
    <domain>
        <recommendedName>
            <fullName evidence="1">Methylenetetrahydrofolate dehydrogenase</fullName>
            <ecNumber evidence="1">1.5.1.5</ecNumber>
        </recommendedName>
    </domain>
    <domain>
        <recommendedName>
            <fullName evidence="1">Methenyltetrahydrofolate cyclohydrolase</fullName>
            <ecNumber evidence="1">3.5.4.9</ecNumber>
        </recommendedName>
    </domain>
</protein>
<gene>
    <name evidence="1" type="primary">folD</name>
    <name type="ordered locus">Shew185_1591</name>
</gene>
<feature type="chain" id="PRO_1000069258" description="Bifunctional protein FolD">
    <location>
        <begin position="1"/>
        <end position="284"/>
    </location>
</feature>
<feature type="binding site" evidence="1">
    <location>
        <begin position="166"/>
        <end position="168"/>
    </location>
    <ligand>
        <name>NADP(+)</name>
        <dbReference type="ChEBI" id="CHEBI:58349"/>
    </ligand>
</feature>
<feature type="binding site" evidence="1">
    <location>
        <position position="232"/>
    </location>
    <ligand>
        <name>NADP(+)</name>
        <dbReference type="ChEBI" id="CHEBI:58349"/>
    </ligand>
</feature>
<name>FOLD_SHEB8</name>
<reference key="1">
    <citation type="submission" date="2007-07" db="EMBL/GenBank/DDBJ databases">
        <title>Complete sequence of chromosome of Shewanella baltica OS185.</title>
        <authorList>
            <consortium name="US DOE Joint Genome Institute"/>
            <person name="Copeland A."/>
            <person name="Lucas S."/>
            <person name="Lapidus A."/>
            <person name="Barry K."/>
            <person name="Glavina del Rio T."/>
            <person name="Dalin E."/>
            <person name="Tice H."/>
            <person name="Pitluck S."/>
            <person name="Sims D."/>
            <person name="Brettin T."/>
            <person name="Bruce D."/>
            <person name="Detter J.C."/>
            <person name="Han C."/>
            <person name="Schmutz J."/>
            <person name="Larimer F."/>
            <person name="Land M."/>
            <person name="Hauser L."/>
            <person name="Kyrpides N."/>
            <person name="Mikhailova N."/>
            <person name="Brettar I."/>
            <person name="Rodrigues J."/>
            <person name="Konstantinidis K."/>
            <person name="Tiedje J."/>
            <person name="Richardson P."/>
        </authorList>
    </citation>
    <scope>NUCLEOTIDE SEQUENCE [LARGE SCALE GENOMIC DNA]</scope>
    <source>
        <strain>OS185</strain>
    </source>
</reference>
<proteinExistence type="inferred from homology"/>
<evidence type="ECO:0000255" key="1">
    <source>
        <dbReference type="HAMAP-Rule" id="MF_01576"/>
    </source>
</evidence>
<comment type="function">
    <text evidence="1">Catalyzes the oxidation of 5,10-methylenetetrahydrofolate to 5,10-methenyltetrahydrofolate and then the hydrolysis of 5,10-methenyltetrahydrofolate to 10-formyltetrahydrofolate.</text>
</comment>
<comment type="catalytic activity">
    <reaction evidence="1">
        <text>(6R)-5,10-methylene-5,6,7,8-tetrahydrofolate + NADP(+) = (6R)-5,10-methenyltetrahydrofolate + NADPH</text>
        <dbReference type="Rhea" id="RHEA:22812"/>
        <dbReference type="ChEBI" id="CHEBI:15636"/>
        <dbReference type="ChEBI" id="CHEBI:57455"/>
        <dbReference type="ChEBI" id="CHEBI:57783"/>
        <dbReference type="ChEBI" id="CHEBI:58349"/>
        <dbReference type="EC" id="1.5.1.5"/>
    </reaction>
</comment>
<comment type="catalytic activity">
    <reaction evidence="1">
        <text>(6R)-5,10-methenyltetrahydrofolate + H2O = (6R)-10-formyltetrahydrofolate + H(+)</text>
        <dbReference type="Rhea" id="RHEA:23700"/>
        <dbReference type="ChEBI" id="CHEBI:15377"/>
        <dbReference type="ChEBI" id="CHEBI:15378"/>
        <dbReference type="ChEBI" id="CHEBI:57455"/>
        <dbReference type="ChEBI" id="CHEBI:195366"/>
        <dbReference type="EC" id="3.5.4.9"/>
    </reaction>
</comment>
<comment type="pathway">
    <text evidence="1">One-carbon metabolism; tetrahydrofolate interconversion.</text>
</comment>
<comment type="subunit">
    <text evidence="1">Homodimer.</text>
</comment>
<comment type="similarity">
    <text evidence="1">Belongs to the tetrahydrofolate dehydrogenase/cyclohydrolase family.</text>
</comment>
<accession>A6WLP9</accession>
<organism>
    <name type="scientific">Shewanella baltica (strain OS185)</name>
    <dbReference type="NCBI Taxonomy" id="402882"/>
    <lineage>
        <taxon>Bacteria</taxon>
        <taxon>Pseudomonadati</taxon>
        <taxon>Pseudomonadota</taxon>
        <taxon>Gammaproteobacteria</taxon>
        <taxon>Alteromonadales</taxon>
        <taxon>Shewanellaceae</taxon>
        <taxon>Shewanella</taxon>
    </lineage>
</organism>
<dbReference type="EC" id="1.5.1.5" evidence="1"/>
<dbReference type="EC" id="3.5.4.9" evidence="1"/>
<dbReference type="EMBL" id="CP000753">
    <property type="protein sequence ID" value="ABS07738.1"/>
    <property type="molecule type" value="Genomic_DNA"/>
</dbReference>
<dbReference type="RefSeq" id="WP_011846463.1">
    <property type="nucleotide sequence ID" value="NC_009665.1"/>
</dbReference>
<dbReference type="SMR" id="A6WLP9"/>
<dbReference type="KEGG" id="sbm:Shew185_1591"/>
<dbReference type="HOGENOM" id="CLU_034045_2_1_6"/>
<dbReference type="UniPathway" id="UPA00193"/>
<dbReference type="GO" id="GO:0005829">
    <property type="term" value="C:cytosol"/>
    <property type="evidence" value="ECO:0007669"/>
    <property type="project" value="TreeGrafter"/>
</dbReference>
<dbReference type="GO" id="GO:0004477">
    <property type="term" value="F:methenyltetrahydrofolate cyclohydrolase activity"/>
    <property type="evidence" value="ECO:0007669"/>
    <property type="project" value="UniProtKB-UniRule"/>
</dbReference>
<dbReference type="GO" id="GO:0004488">
    <property type="term" value="F:methylenetetrahydrofolate dehydrogenase (NADP+) activity"/>
    <property type="evidence" value="ECO:0007669"/>
    <property type="project" value="UniProtKB-UniRule"/>
</dbReference>
<dbReference type="GO" id="GO:0000105">
    <property type="term" value="P:L-histidine biosynthetic process"/>
    <property type="evidence" value="ECO:0007669"/>
    <property type="project" value="UniProtKB-KW"/>
</dbReference>
<dbReference type="GO" id="GO:0009086">
    <property type="term" value="P:methionine biosynthetic process"/>
    <property type="evidence" value="ECO:0007669"/>
    <property type="project" value="UniProtKB-KW"/>
</dbReference>
<dbReference type="GO" id="GO:0006164">
    <property type="term" value="P:purine nucleotide biosynthetic process"/>
    <property type="evidence" value="ECO:0007669"/>
    <property type="project" value="UniProtKB-KW"/>
</dbReference>
<dbReference type="GO" id="GO:0035999">
    <property type="term" value="P:tetrahydrofolate interconversion"/>
    <property type="evidence" value="ECO:0007669"/>
    <property type="project" value="UniProtKB-UniRule"/>
</dbReference>
<dbReference type="CDD" id="cd01080">
    <property type="entry name" value="NAD_bind_m-THF_DH_Cyclohyd"/>
    <property type="match status" value="1"/>
</dbReference>
<dbReference type="FunFam" id="3.40.50.10860:FF:000001">
    <property type="entry name" value="Bifunctional protein FolD"/>
    <property type="match status" value="1"/>
</dbReference>
<dbReference type="FunFam" id="3.40.50.720:FF:000006">
    <property type="entry name" value="Bifunctional protein FolD"/>
    <property type="match status" value="1"/>
</dbReference>
<dbReference type="Gene3D" id="3.40.50.10860">
    <property type="entry name" value="Leucine Dehydrogenase, chain A, domain 1"/>
    <property type="match status" value="1"/>
</dbReference>
<dbReference type="Gene3D" id="3.40.50.720">
    <property type="entry name" value="NAD(P)-binding Rossmann-like Domain"/>
    <property type="match status" value="1"/>
</dbReference>
<dbReference type="HAMAP" id="MF_01576">
    <property type="entry name" value="THF_DHG_CYH"/>
    <property type="match status" value="1"/>
</dbReference>
<dbReference type="InterPro" id="IPR046346">
    <property type="entry name" value="Aminoacid_DH-like_N_sf"/>
</dbReference>
<dbReference type="InterPro" id="IPR036291">
    <property type="entry name" value="NAD(P)-bd_dom_sf"/>
</dbReference>
<dbReference type="InterPro" id="IPR000672">
    <property type="entry name" value="THF_DH/CycHdrlase"/>
</dbReference>
<dbReference type="InterPro" id="IPR020630">
    <property type="entry name" value="THF_DH/CycHdrlase_cat_dom"/>
</dbReference>
<dbReference type="InterPro" id="IPR020867">
    <property type="entry name" value="THF_DH/CycHdrlase_CS"/>
</dbReference>
<dbReference type="InterPro" id="IPR020631">
    <property type="entry name" value="THF_DH/CycHdrlase_NAD-bd_dom"/>
</dbReference>
<dbReference type="NCBIfam" id="NF008058">
    <property type="entry name" value="PRK10792.1"/>
    <property type="match status" value="1"/>
</dbReference>
<dbReference type="PANTHER" id="PTHR48099:SF5">
    <property type="entry name" value="C-1-TETRAHYDROFOLATE SYNTHASE, CYTOPLASMIC"/>
    <property type="match status" value="1"/>
</dbReference>
<dbReference type="PANTHER" id="PTHR48099">
    <property type="entry name" value="C-1-TETRAHYDROFOLATE SYNTHASE, CYTOPLASMIC-RELATED"/>
    <property type="match status" value="1"/>
</dbReference>
<dbReference type="Pfam" id="PF00763">
    <property type="entry name" value="THF_DHG_CYH"/>
    <property type="match status" value="1"/>
</dbReference>
<dbReference type="Pfam" id="PF02882">
    <property type="entry name" value="THF_DHG_CYH_C"/>
    <property type="match status" value="1"/>
</dbReference>
<dbReference type="PRINTS" id="PR00085">
    <property type="entry name" value="THFDHDRGNASE"/>
</dbReference>
<dbReference type="SUPFAM" id="SSF53223">
    <property type="entry name" value="Aminoacid dehydrogenase-like, N-terminal domain"/>
    <property type="match status" value="1"/>
</dbReference>
<dbReference type="SUPFAM" id="SSF51735">
    <property type="entry name" value="NAD(P)-binding Rossmann-fold domains"/>
    <property type="match status" value="1"/>
</dbReference>
<dbReference type="PROSITE" id="PS00766">
    <property type="entry name" value="THF_DHG_CYH_1"/>
    <property type="match status" value="1"/>
</dbReference>
<dbReference type="PROSITE" id="PS00767">
    <property type="entry name" value="THF_DHG_CYH_2"/>
    <property type="match status" value="1"/>
</dbReference>
<keyword id="KW-0028">Amino-acid biosynthesis</keyword>
<keyword id="KW-0368">Histidine biosynthesis</keyword>
<keyword id="KW-0378">Hydrolase</keyword>
<keyword id="KW-0486">Methionine biosynthesis</keyword>
<keyword id="KW-0511">Multifunctional enzyme</keyword>
<keyword id="KW-0521">NADP</keyword>
<keyword id="KW-0554">One-carbon metabolism</keyword>
<keyword id="KW-0560">Oxidoreductase</keyword>
<keyword id="KW-0658">Purine biosynthesis</keyword>
<sequence length="284" mass="30435">MTAQIIDGKAIAQSIRTKLSEKVTARKEAGQRIPGLAVVLVGADPASQVYVGSKRKACEEVGFISRSYDLETSCSEDELLSLIDSLNDDPTIDGILVQLPLPAHIEDSKVIERIRPDKDVDGFHPYNVGRLAQRIPVLRSCTPMGIMTLIKSTGVDTYGLDAVVVGASNIVGRPMTLELLLAGCTTTTCHRFTKNLEQKIRIADLVVVAVGKPGFIPGEWIKPGAIVIDVGINRLDNGTLVGDVQYDVAAQNASFITPVPGGVGPMTIASLLENTLYAAEQYHD</sequence>